<proteinExistence type="inferred from homology"/>
<reference key="1">
    <citation type="submission" date="2005-09" db="EMBL/GenBank/DDBJ databases">
        <title>The chloroplast genome of mulberry: structural features and comparative analysis.</title>
        <authorList>
            <person name="Ravi V."/>
            <person name="Khurana J.P."/>
            <person name="Tyagi A.K."/>
            <person name="Khurana P."/>
        </authorList>
    </citation>
    <scope>NUCLEOTIDE SEQUENCE [LARGE SCALE GENOMIC DNA]</scope>
    <source>
        <strain>cv. K2</strain>
    </source>
</reference>
<feature type="chain" id="PRO_0000275798" description="Photosystem II reaction center protein I">
    <location>
        <begin position="1"/>
        <end position="36"/>
    </location>
</feature>
<feature type="transmembrane region" description="Helical" evidence="1">
    <location>
        <begin position="4"/>
        <end position="24"/>
    </location>
</feature>
<geneLocation type="chloroplast"/>
<evidence type="ECO:0000255" key="1">
    <source>
        <dbReference type="HAMAP-Rule" id="MF_01316"/>
    </source>
</evidence>
<organism>
    <name type="scientific">Morus indica</name>
    <name type="common">Mulberry</name>
    <dbReference type="NCBI Taxonomy" id="248361"/>
    <lineage>
        <taxon>Eukaryota</taxon>
        <taxon>Viridiplantae</taxon>
        <taxon>Streptophyta</taxon>
        <taxon>Embryophyta</taxon>
        <taxon>Tracheophyta</taxon>
        <taxon>Spermatophyta</taxon>
        <taxon>Magnoliopsida</taxon>
        <taxon>eudicotyledons</taxon>
        <taxon>Gunneridae</taxon>
        <taxon>Pentapetalae</taxon>
        <taxon>rosids</taxon>
        <taxon>fabids</taxon>
        <taxon>Rosales</taxon>
        <taxon>Moraceae</taxon>
        <taxon>Moreae</taxon>
        <taxon>Morus</taxon>
    </lineage>
</organism>
<accession>Q09X33</accession>
<gene>
    <name evidence="1" type="primary">psbI</name>
    <name type="ordered locus">MoinCp005</name>
</gene>
<keyword id="KW-0150">Chloroplast</keyword>
<keyword id="KW-0472">Membrane</keyword>
<keyword id="KW-0602">Photosynthesis</keyword>
<keyword id="KW-0604">Photosystem II</keyword>
<keyword id="KW-0934">Plastid</keyword>
<keyword id="KW-0674">Reaction center</keyword>
<keyword id="KW-0793">Thylakoid</keyword>
<keyword id="KW-0812">Transmembrane</keyword>
<keyword id="KW-1133">Transmembrane helix</keyword>
<protein>
    <recommendedName>
        <fullName evidence="1">Photosystem II reaction center protein I</fullName>
        <shortName evidence="1">PSII-I</shortName>
    </recommendedName>
    <alternativeName>
        <fullName evidence="1">PSII 4.8 kDa protein</fullName>
    </alternativeName>
</protein>
<dbReference type="EMBL" id="DQ226511">
    <property type="protein sequence ID" value="ABB20942.1"/>
    <property type="molecule type" value="Genomic_DNA"/>
</dbReference>
<dbReference type="RefSeq" id="YP_762245.1">
    <property type="nucleotide sequence ID" value="NC_008359.1"/>
</dbReference>
<dbReference type="SMR" id="Q09X33"/>
<dbReference type="GeneID" id="4290659"/>
<dbReference type="GO" id="GO:0009535">
    <property type="term" value="C:chloroplast thylakoid membrane"/>
    <property type="evidence" value="ECO:0007669"/>
    <property type="project" value="UniProtKB-SubCell"/>
</dbReference>
<dbReference type="GO" id="GO:0009539">
    <property type="term" value="C:photosystem II reaction center"/>
    <property type="evidence" value="ECO:0007669"/>
    <property type="project" value="InterPro"/>
</dbReference>
<dbReference type="GO" id="GO:0015979">
    <property type="term" value="P:photosynthesis"/>
    <property type="evidence" value="ECO:0007669"/>
    <property type="project" value="UniProtKB-UniRule"/>
</dbReference>
<dbReference type="HAMAP" id="MF_01316">
    <property type="entry name" value="PSII_PsbI"/>
    <property type="match status" value="1"/>
</dbReference>
<dbReference type="InterPro" id="IPR003686">
    <property type="entry name" value="PSII_PsbI"/>
</dbReference>
<dbReference type="InterPro" id="IPR037271">
    <property type="entry name" value="PSII_PsbI_sf"/>
</dbReference>
<dbReference type="NCBIfam" id="NF002735">
    <property type="entry name" value="PRK02655.1"/>
    <property type="match status" value="1"/>
</dbReference>
<dbReference type="PANTHER" id="PTHR35772">
    <property type="entry name" value="PHOTOSYSTEM II REACTION CENTER PROTEIN I"/>
    <property type="match status" value="1"/>
</dbReference>
<dbReference type="PANTHER" id="PTHR35772:SF1">
    <property type="entry name" value="PHOTOSYSTEM II REACTION CENTER PROTEIN I"/>
    <property type="match status" value="1"/>
</dbReference>
<dbReference type="Pfam" id="PF02532">
    <property type="entry name" value="PsbI"/>
    <property type="match status" value="1"/>
</dbReference>
<dbReference type="SUPFAM" id="SSF161041">
    <property type="entry name" value="Photosystem II reaction center protein I, PsbI"/>
    <property type="match status" value="1"/>
</dbReference>
<name>PSBI_MORIN</name>
<sequence length="36" mass="4168">MLTLKLFVYTVVIFFVSLFIFGFLSNDPGRNPGREE</sequence>
<comment type="function">
    <text evidence="1">One of the components of the core complex of photosystem II (PSII), required for its stability and/or assembly. PSII is a light-driven water:plastoquinone oxidoreductase that uses light energy to abstract electrons from H(2)O, generating O(2) and a proton gradient subsequently used for ATP formation. It consists of a core antenna complex that captures photons, and an electron transfer chain that converts photonic excitation into a charge separation.</text>
</comment>
<comment type="subunit">
    <text evidence="1">PSII is composed of 1 copy each of membrane proteins PsbA, PsbB, PsbC, PsbD, PsbE, PsbF, PsbH, PsbI, PsbJ, PsbK, PsbL, PsbM, PsbT, PsbX, PsbY, PsbZ, Psb30/Ycf12, at least 3 peripheral proteins of the oxygen-evolving complex and a large number of cofactors. It forms dimeric complexes.</text>
</comment>
<comment type="subcellular location">
    <subcellularLocation>
        <location evidence="1">Plastid</location>
        <location evidence="1">Chloroplast thylakoid membrane</location>
        <topology evidence="1">Single-pass membrane protein</topology>
    </subcellularLocation>
</comment>
<comment type="similarity">
    <text evidence="1">Belongs to the PsbI family.</text>
</comment>